<protein>
    <recommendedName>
        <fullName evidence="4">Peptidoglycan muramidase Tse3</fullName>
    </recommendedName>
    <alternativeName>
        <fullName>Toxin Tse3</fullName>
        <ecNumber>3.2.1.17</ecNumber>
    </alternativeName>
</protein>
<sequence>MTATSDLIESLISYSWDDWQVTRQEARRVIAAIRNDNVPDATIAALDKSGSLIKLFQRVGPPELARSLIASIAGRTTMQRYQARNALIRSLINNPLGTQTDNWIYFPTITFFDICADLADAAGRLGFAAAGATGVASQAIQGPFSGVGATGVNPTDLPSIAFGDQLKLLNKDPATVTKYSNPLGDLGAYLSQLSPQDKLNQAQTLVGQPISTLFPDAYPGNPPSRAKVMSAAARKYDLTPQLIGAIILAEQRDQTRDEDAKDYQAAVSIKSANTSIGLGQVVVSTAIKYELFTDLLGQPVRRGLSRKAVATLLASDEFNIFATARYIRYVANLASQQDLRKLPKTRGAFPSIDLRAYAGNPRNWPRDNVRALASEYTSRPWDDNLSPGWPMFVDDAYATFLDPGMRFP</sequence>
<dbReference type="EC" id="3.2.1.17"/>
<dbReference type="EMBL" id="AE004091">
    <property type="protein sequence ID" value="AAG06872.1"/>
    <property type="molecule type" value="Genomic_DNA"/>
</dbReference>
<dbReference type="PIR" id="E83210">
    <property type="entry name" value="E83210"/>
</dbReference>
<dbReference type="RefSeq" id="NP_252174.1">
    <property type="nucleotide sequence ID" value="NC_002516.2"/>
</dbReference>
<dbReference type="RefSeq" id="WP_003092026.1">
    <property type="nucleotide sequence ID" value="NZ_QZGE01000039.1"/>
</dbReference>
<dbReference type="PDB" id="3WA5">
    <property type="method" value="X-ray"/>
    <property type="resolution" value="1.90 A"/>
    <property type="chains" value="A=1-408"/>
</dbReference>
<dbReference type="PDB" id="4LUQ">
    <property type="method" value="X-ray"/>
    <property type="resolution" value="1.77 A"/>
    <property type="chains" value="A/B=1-408"/>
</dbReference>
<dbReference type="PDB" id="4M5E">
    <property type="method" value="X-ray"/>
    <property type="resolution" value="1.49 A"/>
    <property type="chains" value="A=1-402"/>
</dbReference>
<dbReference type="PDB" id="4M5F">
    <property type="method" value="X-ray"/>
    <property type="resolution" value="2.50 A"/>
    <property type="chains" value="A=1-400"/>
</dbReference>
<dbReference type="PDB" id="4N7S">
    <property type="method" value="X-ray"/>
    <property type="resolution" value="2.10 A"/>
    <property type="chains" value="A/C=2-402"/>
</dbReference>
<dbReference type="PDB" id="4N80">
    <property type="method" value="X-ray"/>
    <property type="resolution" value="2.40 A"/>
    <property type="chains" value="A=2-400"/>
</dbReference>
<dbReference type="PDB" id="4N88">
    <property type="method" value="X-ray"/>
    <property type="resolution" value="2.80 A"/>
    <property type="chains" value="A/C=2-402"/>
</dbReference>
<dbReference type="PDBsum" id="3WA5"/>
<dbReference type="PDBsum" id="4LUQ"/>
<dbReference type="PDBsum" id="4M5E"/>
<dbReference type="PDBsum" id="4M5F"/>
<dbReference type="PDBsum" id="4N7S"/>
<dbReference type="PDBsum" id="4N80"/>
<dbReference type="PDBsum" id="4N88"/>
<dbReference type="SMR" id="Q9HYC5"/>
<dbReference type="STRING" id="208964.PA3484"/>
<dbReference type="PaxDb" id="208964-PA3484"/>
<dbReference type="GeneID" id="880027"/>
<dbReference type="KEGG" id="pae:PA3484"/>
<dbReference type="PATRIC" id="fig|208964.12.peg.3647"/>
<dbReference type="PseudoCAP" id="PA3484"/>
<dbReference type="HOGENOM" id="CLU_054752_0_0_6"/>
<dbReference type="InParanoid" id="Q9HYC5"/>
<dbReference type="BioCyc" id="PAER208964:G1FZ6-3552-MONOMER"/>
<dbReference type="EvolutionaryTrace" id="Q9HYC5"/>
<dbReference type="Proteomes" id="UP000002438">
    <property type="component" value="Chromosome"/>
</dbReference>
<dbReference type="GO" id="GO:0005576">
    <property type="term" value="C:extracellular region"/>
    <property type="evidence" value="ECO:0007669"/>
    <property type="project" value="UniProtKB-SubCell"/>
</dbReference>
<dbReference type="GO" id="GO:0033644">
    <property type="term" value="C:host cell membrane"/>
    <property type="evidence" value="ECO:0007669"/>
    <property type="project" value="UniProtKB-SubCell"/>
</dbReference>
<dbReference type="GO" id="GO:0016020">
    <property type="term" value="C:membrane"/>
    <property type="evidence" value="ECO:0007669"/>
    <property type="project" value="UniProtKB-KW"/>
</dbReference>
<dbReference type="GO" id="GO:0003796">
    <property type="term" value="F:lysozyme activity"/>
    <property type="evidence" value="ECO:0000314"/>
    <property type="project" value="PseudoCAP"/>
</dbReference>
<dbReference type="GO" id="GO:0046872">
    <property type="term" value="F:metal ion binding"/>
    <property type="evidence" value="ECO:0007669"/>
    <property type="project" value="UniProtKB-KW"/>
</dbReference>
<dbReference type="Gene3D" id="1.10.530.10">
    <property type="match status" value="1"/>
</dbReference>
<dbReference type="InterPro" id="IPR054338">
    <property type="entry name" value="Tse3_cat"/>
</dbReference>
<dbReference type="InterPro" id="IPR054356">
    <property type="entry name" value="Tse3_N"/>
</dbReference>
<dbReference type="Pfam" id="PF22115">
    <property type="entry name" value="T6SS_Tse3_cat"/>
    <property type="match status" value="1"/>
</dbReference>
<dbReference type="Pfam" id="PF22120">
    <property type="entry name" value="T6SS_Tse3_N"/>
    <property type="match status" value="1"/>
</dbReference>
<keyword id="KW-0002">3D-structure</keyword>
<keyword id="KW-0106">Calcium</keyword>
<keyword id="KW-1043">Host membrane</keyword>
<keyword id="KW-0378">Hydrolase</keyword>
<keyword id="KW-0472">Membrane</keyword>
<keyword id="KW-0479">Metal-binding</keyword>
<keyword id="KW-1185">Reference proteome</keyword>
<keyword id="KW-0964">Secreted</keyword>
<accession>Q9HYC5</accession>
<comment type="function">
    <text evidence="1 2">Toxin secreted by the H1 type VI (H1-T6SS) secretion system into the periplasm of recipient cells. Degrades peptidoglycan via muramidase activity thereby helping itself to compete with other bacteria (PubMed:21776080). To protect itself, the bacterium synthesizes immunity protein Tsi3 that specifically interacts with and inactivates cognate toxin (PubMed:24025333).</text>
</comment>
<comment type="catalytic activity">
    <reaction evidence="1">
        <text>Hydrolysis of (1-&gt;4)-beta-linkages between N-acetylmuramic acid and N-acetyl-D-glucosamine residues in a peptidoglycan and between N-acetyl-D-glucosamine residues in chitodextrins.</text>
        <dbReference type="EC" id="3.2.1.17"/>
    </reaction>
</comment>
<comment type="cofactor">
    <cofactor evidence="2">
        <name>Ca(2+)</name>
        <dbReference type="ChEBI" id="CHEBI:29108"/>
    </cofactor>
</comment>
<comment type="activity regulation">
    <text evidence="3">Enzymatic activity depends on membrane binding.</text>
</comment>
<comment type="subunit">
    <text evidence="2 3">Forms a heterotetramer with Tsi3 consisting of two Tse3 dimers and two Tsi3 dimers. Formation of the complex inactivates Tse3 enzymatic activity.</text>
</comment>
<comment type="subcellular location">
    <subcellularLocation>
        <location evidence="1">Host membrane</location>
    </subcellularLocation>
    <subcellularLocation>
        <location evidence="1">Secreted</location>
    </subcellularLocation>
    <text evidence="1">Delivered to the target cell periplasm by the H1 type VI (H1-T6SS) secretion system.</text>
</comment>
<evidence type="ECO:0000269" key="1">
    <source>
    </source>
</evidence>
<evidence type="ECO:0000269" key="2">
    <source>
    </source>
</evidence>
<evidence type="ECO:0000269" key="3">
    <source>
    </source>
</evidence>
<evidence type="ECO:0000303" key="4">
    <source>
    </source>
</evidence>
<evidence type="ECO:0007744" key="5">
    <source>
        <dbReference type="PDB" id="4LUQ"/>
    </source>
</evidence>
<evidence type="ECO:0007744" key="6">
    <source>
        <dbReference type="PDB" id="4M5E"/>
    </source>
</evidence>
<evidence type="ECO:0007744" key="7">
    <source>
        <dbReference type="PDB" id="4M5F"/>
    </source>
</evidence>
<evidence type="ECO:0007744" key="8">
    <source>
        <dbReference type="PDB" id="4N7S"/>
    </source>
</evidence>
<evidence type="ECO:0007829" key="9">
    <source>
        <dbReference type="PDB" id="3WA5"/>
    </source>
</evidence>
<evidence type="ECO:0007829" key="10">
    <source>
        <dbReference type="PDB" id="4M5E"/>
    </source>
</evidence>
<evidence type="ECO:0007829" key="11">
    <source>
        <dbReference type="PDB" id="4M5F"/>
    </source>
</evidence>
<evidence type="ECO:0007829" key="12">
    <source>
        <dbReference type="PDB" id="4N80"/>
    </source>
</evidence>
<organism>
    <name type="scientific">Pseudomonas aeruginosa (strain ATCC 15692 / DSM 22644 / CIP 104116 / JCM 14847 / LMG 12228 / 1C / PRS 101 / PAO1)</name>
    <dbReference type="NCBI Taxonomy" id="208964"/>
    <lineage>
        <taxon>Bacteria</taxon>
        <taxon>Pseudomonadati</taxon>
        <taxon>Pseudomonadota</taxon>
        <taxon>Gammaproteobacteria</taxon>
        <taxon>Pseudomonadales</taxon>
        <taxon>Pseudomonadaceae</taxon>
        <taxon>Pseudomonas</taxon>
    </lineage>
</organism>
<feature type="chain" id="PRO_0000449041" description="Peptidoglycan muramidase Tse3">
    <location>
        <begin position="1"/>
        <end position="408"/>
    </location>
</feature>
<feature type="binding site" evidence="3 6">
    <location>
        <position position="181"/>
    </location>
    <ligand>
        <name>Ca(2+)</name>
        <dbReference type="ChEBI" id="CHEBI:29108"/>
        <label>1</label>
    </ligand>
</feature>
<feature type="binding site" evidence="3 6">
    <location>
        <position position="253"/>
    </location>
    <ligand>
        <name>Ca(2+)</name>
        <dbReference type="ChEBI" id="CHEBI:29108"/>
        <label>1</label>
    </ligand>
</feature>
<feature type="binding site" evidence="3 6">
    <location>
        <position position="254"/>
    </location>
    <ligand>
        <name>Ca(2+)</name>
        <dbReference type="ChEBI" id="CHEBI:29108"/>
        <label>1</label>
    </ligand>
</feature>
<feature type="binding site" evidence="3 6">
    <location>
        <position position="258"/>
    </location>
    <ligand>
        <name>Ca(2+)</name>
        <dbReference type="ChEBI" id="CHEBI:29108"/>
        <label>1</label>
    </ligand>
</feature>
<feature type="binding site" evidence="3 6">
    <location>
        <position position="375"/>
    </location>
    <ligand>
        <name>Ca(2+)</name>
        <dbReference type="ChEBI" id="CHEBI:29108"/>
        <label>2</label>
    </ligand>
</feature>
<feature type="binding site" evidence="3 6">
    <location>
        <position position="378"/>
    </location>
    <ligand>
        <name>Ca(2+)</name>
        <dbReference type="ChEBI" id="CHEBI:29108"/>
        <label>2</label>
    </ligand>
</feature>
<feature type="binding site" evidence="3 6">
    <location>
        <position position="379"/>
    </location>
    <ligand>
        <name>Ca(2+)</name>
        <dbReference type="ChEBI" id="CHEBI:29108"/>
        <label>2</label>
    </ligand>
</feature>
<feature type="binding site" evidence="3 6">
    <location>
        <position position="382"/>
    </location>
    <ligand>
        <name>Ca(2+)</name>
        <dbReference type="ChEBI" id="CHEBI:29108"/>
        <label>2</label>
    </ligand>
</feature>
<feature type="binding site" evidence="3 6">
    <location>
        <position position="384"/>
    </location>
    <ligand>
        <name>Ca(2+)</name>
        <dbReference type="ChEBI" id="CHEBI:29108"/>
        <label>2</label>
    </ligand>
</feature>
<feature type="mutagenesis site" description="Significant loss of membrane-binding affinity." evidence="3">
    <original>D</original>
    <variation>A</variation>
    <location>
        <position position="18"/>
    </location>
</feature>
<feature type="mutagenesis site" description="Significant loss of membrane-binding affinity." evidence="3">
    <original>E</original>
    <variation>A</variation>
    <location>
        <position position="25"/>
    </location>
</feature>
<feature type="mutagenesis site" description="Displays significant diminished activity." evidence="1 3">
    <original>E</original>
    <variation>Q</variation>
    <location>
        <position position="250"/>
    </location>
</feature>
<feature type="mutagenesis site" description="Complete loss of enzymatic activity." evidence="3">
    <original>D</original>
    <variation>A</variation>
    <location>
        <position position="262"/>
    </location>
</feature>
<feature type="helix" evidence="10">
    <location>
        <begin position="3"/>
        <end position="12"/>
    </location>
</feature>
<feature type="strand" evidence="11">
    <location>
        <begin position="17"/>
        <end position="19"/>
    </location>
</feature>
<feature type="helix" evidence="10">
    <location>
        <begin position="23"/>
        <end position="35"/>
    </location>
</feature>
<feature type="helix" evidence="10">
    <location>
        <begin position="39"/>
        <end position="48"/>
    </location>
</feature>
<feature type="helix" evidence="10">
    <location>
        <begin position="51"/>
        <end position="58"/>
    </location>
</feature>
<feature type="helix" evidence="10">
    <location>
        <begin position="62"/>
        <end position="75"/>
    </location>
</feature>
<feature type="strand" evidence="9">
    <location>
        <begin position="77"/>
        <end position="79"/>
    </location>
</feature>
<feature type="helix" evidence="10">
    <location>
        <begin position="80"/>
        <end position="90"/>
    </location>
</feature>
<feature type="helix" evidence="10">
    <location>
        <begin position="91"/>
        <end position="93"/>
    </location>
</feature>
<feature type="turn" evidence="12">
    <location>
        <begin position="95"/>
        <end position="98"/>
    </location>
</feature>
<feature type="helix" evidence="10">
    <location>
        <begin position="101"/>
        <end position="103"/>
    </location>
</feature>
<feature type="helix" evidence="10">
    <location>
        <begin position="108"/>
        <end position="124"/>
    </location>
</feature>
<feature type="strand" evidence="10">
    <location>
        <begin position="141"/>
        <end position="144"/>
    </location>
</feature>
<feature type="helix" evidence="10">
    <location>
        <begin position="147"/>
        <end position="150"/>
    </location>
</feature>
<feature type="helix" evidence="10">
    <location>
        <begin position="154"/>
        <end position="156"/>
    </location>
</feature>
<feature type="helix" evidence="10">
    <location>
        <begin position="162"/>
        <end position="169"/>
    </location>
</feature>
<feature type="helix" evidence="10">
    <location>
        <begin position="173"/>
        <end position="178"/>
    </location>
</feature>
<feature type="helix" evidence="10">
    <location>
        <begin position="186"/>
        <end position="191"/>
    </location>
</feature>
<feature type="helix" evidence="10">
    <location>
        <begin position="195"/>
        <end position="207"/>
    </location>
</feature>
<feature type="helix" evidence="10">
    <location>
        <begin position="215"/>
        <end position="217"/>
    </location>
</feature>
<feature type="strand" evidence="10">
    <location>
        <begin position="218"/>
        <end position="221"/>
    </location>
</feature>
<feature type="helix" evidence="10">
    <location>
        <begin position="225"/>
        <end position="236"/>
    </location>
</feature>
<feature type="helix" evidence="10">
    <location>
        <begin position="240"/>
        <end position="252"/>
    </location>
</feature>
<feature type="helix" evidence="10">
    <location>
        <begin position="256"/>
        <end position="267"/>
    </location>
</feature>
<feature type="turn" evidence="10">
    <location>
        <begin position="277"/>
        <end position="280"/>
    </location>
</feature>
<feature type="helix" evidence="10">
    <location>
        <begin position="283"/>
        <end position="288"/>
    </location>
</feature>
<feature type="turn" evidence="10">
    <location>
        <begin position="289"/>
        <end position="295"/>
    </location>
</feature>
<feature type="helix" evidence="10">
    <location>
        <begin position="298"/>
        <end position="303"/>
    </location>
</feature>
<feature type="helix" evidence="10">
    <location>
        <begin position="306"/>
        <end position="313"/>
    </location>
</feature>
<feature type="helix" evidence="10">
    <location>
        <begin position="316"/>
        <end position="335"/>
    </location>
</feature>
<feature type="helix" evidence="10">
    <location>
        <begin position="339"/>
        <end position="341"/>
    </location>
</feature>
<feature type="helix" evidence="10">
    <location>
        <begin position="343"/>
        <end position="348"/>
    </location>
</feature>
<feature type="helix" evidence="10">
    <location>
        <begin position="355"/>
        <end position="358"/>
    </location>
</feature>
<feature type="helix" evidence="10">
    <location>
        <begin position="361"/>
        <end position="363"/>
    </location>
</feature>
<feature type="helix" evidence="10">
    <location>
        <begin position="366"/>
        <end position="377"/>
    </location>
</feature>
<feature type="helix" evidence="10">
    <location>
        <begin position="389"/>
        <end position="402"/>
    </location>
</feature>
<gene>
    <name evidence="4" type="primary">tse3</name>
    <name type="ordered locus">PA3484</name>
</gene>
<reference key="1">
    <citation type="journal article" date="2000" name="Nature">
        <title>Complete genome sequence of Pseudomonas aeruginosa PAO1, an opportunistic pathogen.</title>
        <authorList>
            <person name="Stover C.K."/>
            <person name="Pham X.-Q.T."/>
            <person name="Erwin A.L."/>
            <person name="Mizoguchi S.D."/>
            <person name="Warrener P."/>
            <person name="Hickey M.J."/>
            <person name="Brinkman F.S.L."/>
            <person name="Hufnagle W.O."/>
            <person name="Kowalik D.J."/>
            <person name="Lagrou M."/>
            <person name="Garber R.L."/>
            <person name="Goltry L."/>
            <person name="Tolentino E."/>
            <person name="Westbrock-Wadman S."/>
            <person name="Yuan Y."/>
            <person name="Brody L.L."/>
            <person name="Coulter S.N."/>
            <person name="Folger K.R."/>
            <person name="Kas A."/>
            <person name="Larbig K."/>
            <person name="Lim R.M."/>
            <person name="Smith K.A."/>
            <person name="Spencer D.H."/>
            <person name="Wong G.K.-S."/>
            <person name="Wu Z."/>
            <person name="Paulsen I.T."/>
            <person name="Reizer J."/>
            <person name="Saier M.H. Jr."/>
            <person name="Hancock R.E.W."/>
            <person name="Lory S."/>
            <person name="Olson M.V."/>
        </authorList>
    </citation>
    <scope>NUCLEOTIDE SEQUENCE [LARGE SCALE GENOMIC DNA]</scope>
    <source>
        <strain>ATCC 15692 / DSM 22644 / CIP 104116 / JCM 14847 / LMG 12228 / 1C / PRS 101 / PAO1</strain>
    </source>
</reference>
<reference key="2">
    <citation type="journal article" date="2011" name="Nature">
        <title>Type VI secretion delivers bacteriolytic effectors to target cells.</title>
        <authorList>
            <person name="Russell A.B."/>
            <person name="Hood R.D."/>
            <person name="Bui N.K."/>
            <person name="LeRoux M."/>
            <person name="Vollmer W."/>
            <person name="Mougous J.D."/>
        </authorList>
    </citation>
    <scope>FUNCTION</scope>
    <scope>SUBCELLULAR LOCATION</scope>
    <scope>MUTAGENESIS OF GLU-250</scope>
    <scope>CATALYTIC ACTIVITY</scope>
</reference>
<reference evidence="5" key="3">
    <citation type="journal article" date="2013" name="J. Biol. Chem.">
        <title>Structural Insights on the bacteriolytic and self-protection mechanism of muramidase effector Tse3 in Pseudomonas aeruginosa.</title>
        <authorList>
            <person name="Li L."/>
            <person name="Zhang W."/>
            <person name="Liu Q."/>
            <person name="Gao Y."/>
            <person name="Gao Y."/>
            <person name="Wang Y."/>
            <person name="Wang D.Z."/>
            <person name="Li Z."/>
            <person name="Wang T."/>
        </authorList>
    </citation>
    <scope>X-RAY CRYSTALLOGRAPHY (1.77 ANGSTROMS) IN COMPLEX WITH CALCIUM</scope>
    <scope>FUNCTION</scope>
    <scope>COFACTOR</scope>
</reference>
<reference evidence="6 7 8" key="4">
    <citation type="journal article" date="2014" name="Mol. Microbiol.">
        <title>Structural insights into the T6SS effector protein Tse3 and the Tse3-Tsi3 complex from Pseudomonas aeruginosa reveal a calcium-dependent membrane-binding mechanism.</title>
        <authorList>
            <person name="Lu D."/>
            <person name="Shang G."/>
            <person name="Zhang H."/>
            <person name="Yu Q."/>
            <person name="Cong X."/>
            <person name="Yuan J."/>
            <person name="He F."/>
            <person name="Zhu C."/>
            <person name="Zhao Y."/>
            <person name="Yin K."/>
            <person name="Chen Y."/>
            <person name="Hu J."/>
            <person name="Zhang X."/>
            <person name="Yuan Z."/>
            <person name="Xu S."/>
            <person name="Hu W."/>
            <person name="Cang H."/>
            <person name="Gu L."/>
        </authorList>
    </citation>
    <scope>X-RAY CRYSTALLOGRAPHY (1.49 ANGSTROMS) OF 1-402 IN COMPLEX WITH CALCIUM</scope>
    <scope>COFACTOR</scope>
    <scope>INTERACTION WITH TSI3</scope>
    <scope>MUTAGENESIS OF ASP-18; GLU-25; GLU-250 AND ASP-262</scope>
</reference>
<proteinExistence type="evidence at protein level"/>
<name>TSE3_PSEAE</name>